<reference key="1">
    <citation type="submission" date="2007-12" db="EMBL/GenBank/DDBJ databases">
        <title>Complete sequence of chromosome of Francisella philomiragia subsp. philomiragia ATCC 25017.</title>
        <authorList>
            <consortium name="US DOE Joint Genome Institute"/>
            <person name="Copeland A."/>
            <person name="Lucas S."/>
            <person name="Lapidus A."/>
            <person name="Barry K."/>
            <person name="Detter J.C."/>
            <person name="Glavina del Rio T."/>
            <person name="Hammon N."/>
            <person name="Israni S."/>
            <person name="Dalin E."/>
            <person name="Tice H."/>
            <person name="Pitluck S."/>
            <person name="Chain P."/>
            <person name="Malfatti S."/>
            <person name="Shin M."/>
            <person name="Vergez L."/>
            <person name="Schmutz J."/>
            <person name="Larimer F."/>
            <person name="Land M."/>
            <person name="Hauser L."/>
            <person name="Richardson P."/>
        </authorList>
    </citation>
    <scope>NUCLEOTIDE SEQUENCE [LARGE SCALE GENOMIC DNA]</scope>
    <source>
        <strain>ATCC 25017 / CCUG 19701 / FSC 153 / O#319-036</strain>
    </source>
</reference>
<feature type="chain" id="PRO_1000074613" description="Cysteine--tRNA ligase">
    <location>
        <begin position="1"/>
        <end position="459"/>
    </location>
</feature>
<feature type="short sequence motif" description="'HIGH' region">
    <location>
        <begin position="29"/>
        <end position="39"/>
    </location>
</feature>
<feature type="short sequence motif" description="'KMSKS' region">
    <location>
        <begin position="265"/>
        <end position="269"/>
    </location>
</feature>
<feature type="binding site" evidence="1">
    <location>
        <position position="27"/>
    </location>
    <ligand>
        <name>Zn(2+)</name>
        <dbReference type="ChEBI" id="CHEBI:29105"/>
    </ligand>
</feature>
<feature type="binding site" evidence="1">
    <location>
        <position position="208"/>
    </location>
    <ligand>
        <name>Zn(2+)</name>
        <dbReference type="ChEBI" id="CHEBI:29105"/>
    </ligand>
</feature>
<feature type="binding site" evidence="1">
    <location>
        <position position="233"/>
    </location>
    <ligand>
        <name>Zn(2+)</name>
        <dbReference type="ChEBI" id="CHEBI:29105"/>
    </ligand>
</feature>
<feature type="binding site" evidence="1">
    <location>
        <position position="237"/>
    </location>
    <ligand>
        <name>Zn(2+)</name>
        <dbReference type="ChEBI" id="CHEBI:29105"/>
    </ligand>
</feature>
<feature type="binding site" evidence="1">
    <location>
        <position position="268"/>
    </location>
    <ligand>
        <name>ATP</name>
        <dbReference type="ChEBI" id="CHEBI:30616"/>
    </ligand>
</feature>
<evidence type="ECO:0000255" key="1">
    <source>
        <dbReference type="HAMAP-Rule" id="MF_00041"/>
    </source>
</evidence>
<protein>
    <recommendedName>
        <fullName evidence="1">Cysteine--tRNA ligase</fullName>
        <ecNumber evidence="1">6.1.1.16</ecNumber>
    </recommendedName>
    <alternativeName>
        <fullName evidence="1">Cysteinyl-tRNA synthetase</fullName>
        <shortName evidence="1">CysRS</shortName>
    </alternativeName>
</protein>
<sequence>MIFYNSLSGKKEEFKPIEPNKIKMYVCGITVYDDCHIGHARTNIAFDVINRYFKYRGFDVTFVRNITDIDDKIIKRANENGETTDKLVERTIKSMHDAFDKLNILRPTKEPRATQTIPEMIAMIETLVEKGFAYQGTNGDVFYRVAKFADYGKLSKQNLEALEQGSRVDVVEEKENPMDFVLWKMAKEGEPAWDSPWGAGRPGWHIECSAMSKKLLGDTFDIHAGGSDLRFPHHENEIAQSEACNECTFANYWLHSGMVKVNAEKMSKSLNNFFTINEVIEEYHPEVIRYFLASTVYRSEINYSKENLDNARASVERLFNALRDIEPVEVNLPDDASEYEEKFIKAMDNDFNTPEALAVLFSLAKEINTLKTVNKYKASGYAFLLRKLCDVLGILFTDIEEYFKQGDGIDVSEIEKLIAERTQAKKDKNYARADEIRNDLQNQGIILEDSATGTTWKKG</sequence>
<name>SYC_FRAP2</name>
<organism>
    <name type="scientific">Francisella philomiragia subsp. philomiragia (strain ATCC 25017 / CCUG 19701 / FSC 153 / O#319-036)</name>
    <dbReference type="NCBI Taxonomy" id="484022"/>
    <lineage>
        <taxon>Bacteria</taxon>
        <taxon>Pseudomonadati</taxon>
        <taxon>Pseudomonadota</taxon>
        <taxon>Gammaproteobacteria</taxon>
        <taxon>Thiotrichales</taxon>
        <taxon>Francisellaceae</taxon>
        <taxon>Francisella</taxon>
    </lineage>
</organism>
<proteinExistence type="inferred from homology"/>
<gene>
    <name evidence="1" type="primary">cysS</name>
    <name type="ordered locus">Fphi_0516</name>
</gene>
<keyword id="KW-0030">Aminoacyl-tRNA synthetase</keyword>
<keyword id="KW-0067">ATP-binding</keyword>
<keyword id="KW-0963">Cytoplasm</keyword>
<keyword id="KW-0436">Ligase</keyword>
<keyword id="KW-0479">Metal-binding</keyword>
<keyword id="KW-0547">Nucleotide-binding</keyword>
<keyword id="KW-0648">Protein biosynthesis</keyword>
<keyword id="KW-0862">Zinc</keyword>
<comment type="catalytic activity">
    <reaction evidence="1">
        <text>tRNA(Cys) + L-cysteine + ATP = L-cysteinyl-tRNA(Cys) + AMP + diphosphate</text>
        <dbReference type="Rhea" id="RHEA:17773"/>
        <dbReference type="Rhea" id="RHEA-COMP:9661"/>
        <dbReference type="Rhea" id="RHEA-COMP:9679"/>
        <dbReference type="ChEBI" id="CHEBI:30616"/>
        <dbReference type="ChEBI" id="CHEBI:33019"/>
        <dbReference type="ChEBI" id="CHEBI:35235"/>
        <dbReference type="ChEBI" id="CHEBI:78442"/>
        <dbReference type="ChEBI" id="CHEBI:78517"/>
        <dbReference type="ChEBI" id="CHEBI:456215"/>
        <dbReference type="EC" id="6.1.1.16"/>
    </reaction>
</comment>
<comment type="cofactor">
    <cofactor evidence="1">
        <name>Zn(2+)</name>
        <dbReference type="ChEBI" id="CHEBI:29105"/>
    </cofactor>
    <text evidence="1">Binds 1 zinc ion per subunit.</text>
</comment>
<comment type="subunit">
    <text evidence="1">Monomer.</text>
</comment>
<comment type="subcellular location">
    <subcellularLocation>
        <location evidence="1">Cytoplasm</location>
    </subcellularLocation>
</comment>
<comment type="similarity">
    <text evidence="1">Belongs to the class-I aminoacyl-tRNA synthetase family.</text>
</comment>
<dbReference type="EC" id="6.1.1.16" evidence="1"/>
<dbReference type="EMBL" id="CP000937">
    <property type="protein sequence ID" value="ABZ86734.1"/>
    <property type="molecule type" value="Genomic_DNA"/>
</dbReference>
<dbReference type="SMR" id="B0U0I3"/>
<dbReference type="KEGG" id="fph:Fphi_0516"/>
<dbReference type="eggNOG" id="COG0215">
    <property type="taxonomic scope" value="Bacteria"/>
</dbReference>
<dbReference type="HOGENOM" id="CLU_013528_0_1_6"/>
<dbReference type="GO" id="GO:0005829">
    <property type="term" value="C:cytosol"/>
    <property type="evidence" value="ECO:0007669"/>
    <property type="project" value="TreeGrafter"/>
</dbReference>
<dbReference type="GO" id="GO:0005524">
    <property type="term" value="F:ATP binding"/>
    <property type="evidence" value="ECO:0007669"/>
    <property type="project" value="UniProtKB-UniRule"/>
</dbReference>
<dbReference type="GO" id="GO:0004817">
    <property type="term" value="F:cysteine-tRNA ligase activity"/>
    <property type="evidence" value="ECO:0007669"/>
    <property type="project" value="UniProtKB-UniRule"/>
</dbReference>
<dbReference type="GO" id="GO:0008270">
    <property type="term" value="F:zinc ion binding"/>
    <property type="evidence" value="ECO:0007669"/>
    <property type="project" value="UniProtKB-UniRule"/>
</dbReference>
<dbReference type="GO" id="GO:0006423">
    <property type="term" value="P:cysteinyl-tRNA aminoacylation"/>
    <property type="evidence" value="ECO:0007669"/>
    <property type="project" value="UniProtKB-UniRule"/>
</dbReference>
<dbReference type="CDD" id="cd07963">
    <property type="entry name" value="Anticodon_Ia_Cys"/>
    <property type="match status" value="1"/>
</dbReference>
<dbReference type="CDD" id="cd00672">
    <property type="entry name" value="CysRS_core"/>
    <property type="match status" value="1"/>
</dbReference>
<dbReference type="FunFam" id="3.40.50.620:FF:000009">
    <property type="entry name" value="Cysteine--tRNA ligase"/>
    <property type="match status" value="1"/>
</dbReference>
<dbReference type="Gene3D" id="1.20.120.1910">
    <property type="entry name" value="Cysteine-tRNA ligase, C-terminal anti-codon recognition domain"/>
    <property type="match status" value="1"/>
</dbReference>
<dbReference type="Gene3D" id="3.40.50.620">
    <property type="entry name" value="HUPs"/>
    <property type="match status" value="1"/>
</dbReference>
<dbReference type="HAMAP" id="MF_00041">
    <property type="entry name" value="Cys_tRNA_synth"/>
    <property type="match status" value="1"/>
</dbReference>
<dbReference type="InterPro" id="IPR015803">
    <property type="entry name" value="Cys-tRNA-ligase"/>
</dbReference>
<dbReference type="InterPro" id="IPR015273">
    <property type="entry name" value="Cys-tRNA-synt_Ia_DALR"/>
</dbReference>
<dbReference type="InterPro" id="IPR024909">
    <property type="entry name" value="Cys-tRNA/MSH_ligase"/>
</dbReference>
<dbReference type="InterPro" id="IPR056411">
    <property type="entry name" value="CysS_C"/>
</dbReference>
<dbReference type="InterPro" id="IPR014729">
    <property type="entry name" value="Rossmann-like_a/b/a_fold"/>
</dbReference>
<dbReference type="InterPro" id="IPR032678">
    <property type="entry name" value="tRNA-synt_1_cat_dom"/>
</dbReference>
<dbReference type="InterPro" id="IPR009080">
    <property type="entry name" value="tRNAsynth_Ia_anticodon-bd"/>
</dbReference>
<dbReference type="NCBIfam" id="TIGR00435">
    <property type="entry name" value="cysS"/>
    <property type="match status" value="1"/>
</dbReference>
<dbReference type="PANTHER" id="PTHR10890:SF3">
    <property type="entry name" value="CYSTEINE--TRNA LIGASE, CYTOPLASMIC"/>
    <property type="match status" value="1"/>
</dbReference>
<dbReference type="PANTHER" id="PTHR10890">
    <property type="entry name" value="CYSTEINYL-TRNA SYNTHETASE"/>
    <property type="match status" value="1"/>
</dbReference>
<dbReference type="Pfam" id="PF23493">
    <property type="entry name" value="CysS_C"/>
    <property type="match status" value="1"/>
</dbReference>
<dbReference type="Pfam" id="PF09190">
    <property type="entry name" value="DALR_2"/>
    <property type="match status" value="1"/>
</dbReference>
<dbReference type="Pfam" id="PF01406">
    <property type="entry name" value="tRNA-synt_1e"/>
    <property type="match status" value="1"/>
</dbReference>
<dbReference type="PRINTS" id="PR00983">
    <property type="entry name" value="TRNASYNTHCYS"/>
</dbReference>
<dbReference type="SMART" id="SM00840">
    <property type="entry name" value="DALR_2"/>
    <property type="match status" value="1"/>
</dbReference>
<dbReference type="SUPFAM" id="SSF47323">
    <property type="entry name" value="Anticodon-binding domain of a subclass of class I aminoacyl-tRNA synthetases"/>
    <property type="match status" value="1"/>
</dbReference>
<dbReference type="SUPFAM" id="SSF52374">
    <property type="entry name" value="Nucleotidylyl transferase"/>
    <property type="match status" value="1"/>
</dbReference>
<accession>B0U0I3</accession>